<comment type="subunit">
    <text evidence="1">Part of the 50S ribosomal subunit.</text>
</comment>
<comment type="subcellular location">
    <subcellularLocation>
        <location>Plastid</location>
        <location>Chloroplast</location>
    </subcellularLocation>
</comment>
<comment type="similarity">
    <text evidence="1">Belongs to the universal ribosomal protein uL16 family.</text>
</comment>
<geneLocation type="chloroplast"/>
<keyword id="KW-0150">Chloroplast</keyword>
<keyword id="KW-0934">Plastid</keyword>
<keyword id="KW-1185">Reference proteome</keyword>
<keyword id="KW-0687">Ribonucleoprotein</keyword>
<keyword id="KW-0689">Ribosomal protein</keyword>
<sequence>MLSPKRTKFRKQHRGRMKGKSCRGNRICFGRYALQALEPTWITARQIEAGRRAITRYARRGGKIWVRIFPDKPVTLRPTETRMGSGKGSPEYWVAVVKPGRILYEMGGVSETVARAAISIAASKMPIRSQFIRLEI</sequence>
<reference key="1">
    <citation type="journal article" date="2008" name="BMC Res. Notes">
        <title>The complete chloroplast genome sequence of Brachypodium distachyon: sequence comparison and phylogenetic analysis of eight grass plastomes.</title>
        <authorList>
            <person name="Bortiri E."/>
            <person name="Coleman-Derr D."/>
            <person name="Lazo G.R."/>
            <person name="Anderson O.D."/>
            <person name="Gu Y.Q."/>
        </authorList>
    </citation>
    <scope>NUCLEOTIDE SEQUENCE [LARGE SCALE GENOMIC DNA]</scope>
    <source>
        <strain>cv. Bd21</strain>
    </source>
</reference>
<dbReference type="EMBL" id="EU325680">
    <property type="protein sequence ID" value="ACF08675.1"/>
    <property type="molecule type" value="Genomic_DNA"/>
</dbReference>
<dbReference type="RefSeq" id="YP_002000523.1">
    <property type="nucleotide sequence ID" value="NC_011032.1"/>
</dbReference>
<dbReference type="SMR" id="B3TN87"/>
<dbReference type="FunCoup" id="B3TN87">
    <property type="interactions" value="872"/>
</dbReference>
<dbReference type="STRING" id="15368.B3TN87"/>
<dbReference type="GeneID" id="6439839"/>
<dbReference type="KEGG" id="bdi:6439839"/>
<dbReference type="eggNOG" id="KOG3422">
    <property type="taxonomic scope" value="Eukaryota"/>
</dbReference>
<dbReference type="InParanoid" id="B3TN87"/>
<dbReference type="Proteomes" id="UP000008810">
    <property type="component" value="Chloroplast"/>
</dbReference>
<dbReference type="ExpressionAtlas" id="B3TN87">
    <property type="expression patterns" value="baseline"/>
</dbReference>
<dbReference type="GO" id="GO:0009507">
    <property type="term" value="C:chloroplast"/>
    <property type="evidence" value="ECO:0007669"/>
    <property type="project" value="UniProtKB-SubCell"/>
</dbReference>
<dbReference type="GO" id="GO:0005762">
    <property type="term" value="C:mitochondrial large ribosomal subunit"/>
    <property type="evidence" value="ECO:0000318"/>
    <property type="project" value="GO_Central"/>
</dbReference>
<dbReference type="GO" id="GO:0019843">
    <property type="term" value="F:rRNA binding"/>
    <property type="evidence" value="ECO:0000318"/>
    <property type="project" value="GO_Central"/>
</dbReference>
<dbReference type="GO" id="GO:0003735">
    <property type="term" value="F:structural constituent of ribosome"/>
    <property type="evidence" value="ECO:0000318"/>
    <property type="project" value="GO_Central"/>
</dbReference>
<dbReference type="GO" id="GO:0032543">
    <property type="term" value="P:mitochondrial translation"/>
    <property type="evidence" value="ECO:0000318"/>
    <property type="project" value="GO_Central"/>
</dbReference>
<dbReference type="CDD" id="cd01433">
    <property type="entry name" value="Ribosomal_L16_L10e"/>
    <property type="match status" value="1"/>
</dbReference>
<dbReference type="FunFam" id="3.90.1170.10:FF:000001">
    <property type="entry name" value="50S ribosomal protein L16"/>
    <property type="match status" value="1"/>
</dbReference>
<dbReference type="Gene3D" id="3.90.1170.10">
    <property type="entry name" value="Ribosomal protein L10e/L16"/>
    <property type="match status" value="1"/>
</dbReference>
<dbReference type="HAMAP" id="MF_01342">
    <property type="entry name" value="Ribosomal_uL16"/>
    <property type="match status" value="1"/>
</dbReference>
<dbReference type="InterPro" id="IPR047873">
    <property type="entry name" value="Ribosomal_uL16"/>
</dbReference>
<dbReference type="InterPro" id="IPR000114">
    <property type="entry name" value="Ribosomal_uL16_bact-type"/>
</dbReference>
<dbReference type="InterPro" id="IPR020798">
    <property type="entry name" value="Ribosomal_uL16_CS"/>
</dbReference>
<dbReference type="InterPro" id="IPR016180">
    <property type="entry name" value="Ribosomal_uL16_dom"/>
</dbReference>
<dbReference type="InterPro" id="IPR036920">
    <property type="entry name" value="Ribosomal_uL16_sf"/>
</dbReference>
<dbReference type="NCBIfam" id="TIGR01164">
    <property type="entry name" value="rplP_bact"/>
    <property type="match status" value="1"/>
</dbReference>
<dbReference type="PANTHER" id="PTHR12220">
    <property type="entry name" value="50S/60S RIBOSOMAL PROTEIN L16"/>
    <property type="match status" value="1"/>
</dbReference>
<dbReference type="PANTHER" id="PTHR12220:SF13">
    <property type="entry name" value="LARGE RIBOSOMAL SUBUNIT PROTEIN UL16M"/>
    <property type="match status" value="1"/>
</dbReference>
<dbReference type="Pfam" id="PF00252">
    <property type="entry name" value="Ribosomal_L16"/>
    <property type="match status" value="1"/>
</dbReference>
<dbReference type="PRINTS" id="PR00060">
    <property type="entry name" value="RIBOSOMALL16"/>
</dbReference>
<dbReference type="SUPFAM" id="SSF54686">
    <property type="entry name" value="Ribosomal protein L16p/L10e"/>
    <property type="match status" value="1"/>
</dbReference>
<dbReference type="PROSITE" id="PS00586">
    <property type="entry name" value="RIBOSOMAL_L16_1"/>
    <property type="match status" value="1"/>
</dbReference>
<dbReference type="PROSITE" id="PS00701">
    <property type="entry name" value="RIBOSOMAL_L16_2"/>
    <property type="match status" value="1"/>
</dbReference>
<gene>
    <name evidence="1" type="primary">rpl16</name>
</gene>
<name>RK16_BRADI</name>
<protein>
    <recommendedName>
        <fullName evidence="1">Large ribosomal subunit protein uL16c</fullName>
    </recommendedName>
    <alternativeName>
        <fullName evidence="3">50S ribosomal protein L16, chloroplastic</fullName>
    </alternativeName>
</protein>
<proteinExistence type="inferred from homology"/>
<organism>
    <name type="scientific">Brachypodium distachyon</name>
    <name type="common">Purple false brome</name>
    <name type="synonym">Trachynia distachya</name>
    <dbReference type="NCBI Taxonomy" id="15368"/>
    <lineage>
        <taxon>Eukaryota</taxon>
        <taxon>Viridiplantae</taxon>
        <taxon>Streptophyta</taxon>
        <taxon>Embryophyta</taxon>
        <taxon>Tracheophyta</taxon>
        <taxon>Spermatophyta</taxon>
        <taxon>Magnoliopsida</taxon>
        <taxon>Liliopsida</taxon>
        <taxon>Poales</taxon>
        <taxon>Poaceae</taxon>
        <taxon>BOP clade</taxon>
        <taxon>Pooideae</taxon>
        <taxon>Stipodae</taxon>
        <taxon>Brachypodieae</taxon>
        <taxon>Brachypodium</taxon>
    </lineage>
</organism>
<accession>B3TN87</accession>
<evidence type="ECO:0000255" key="1">
    <source>
        <dbReference type="HAMAP-Rule" id="MF_01342"/>
    </source>
</evidence>
<evidence type="ECO:0000256" key="2">
    <source>
        <dbReference type="SAM" id="MobiDB-lite"/>
    </source>
</evidence>
<evidence type="ECO:0000305" key="3"/>
<feature type="chain" id="PRO_0000354617" description="Large ribosomal subunit protein uL16c">
    <location>
        <begin position="1"/>
        <end position="136"/>
    </location>
</feature>
<feature type="region of interest" description="Disordered" evidence="2">
    <location>
        <begin position="1"/>
        <end position="20"/>
    </location>
</feature>